<dbReference type="EMBL" id="AY823520">
    <property type="protein sequence ID" value="AAW22613.1"/>
    <property type="molecule type" value="mRNA"/>
</dbReference>
<dbReference type="EMBL" id="AK001230">
    <property type="protein sequence ID" value="BAA91568.1"/>
    <property type="molecule type" value="mRNA"/>
</dbReference>
<dbReference type="EMBL" id="AK001935">
    <property type="protein sequence ID" value="BAA91988.1"/>
    <property type="molecule type" value="mRNA"/>
</dbReference>
<dbReference type="EMBL" id="AK022580">
    <property type="protein sequence ID" value="BAB14110.1"/>
    <property type="molecule type" value="mRNA"/>
</dbReference>
<dbReference type="EMBL" id="AK026234">
    <property type="protein sequence ID" value="BAB15404.1"/>
    <property type="status" value="ALT_INIT"/>
    <property type="molecule type" value="mRNA"/>
</dbReference>
<dbReference type="EMBL" id="AC004925">
    <property type="protein sequence ID" value="AAD08852.1"/>
    <property type="molecule type" value="Genomic_DNA"/>
</dbReference>
<dbReference type="EMBL" id="AC096665">
    <property type="status" value="NOT_ANNOTATED_CDS"/>
    <property type="molecule type" value="Genomic_DNA"/>
</dbReference>
<dbReference type="EMBL" id="AC110791">
    <property type="status" value="NOT_ANNOTATED_CDS"/>
    <property type="molecule type" value="Genomic_DNA"/>
</dbReference>
<dbReference type="EMBL" id="CH471070">
    <property type="protein sequence ID" value="EAW83616.1"/>
    <property type="molecule type" value="Genomic_DNA"/>
</dbReference>
<dbReference type="EMBL" id="BC002923">
    <property type="protein sequence ID" value="AAH02923.1"/>
    <property type="molecule type" value="mRNA"/>
</dbReference>
<dbReference type="EMBL" id="AL050120">
    <property type="protein sequence ID" value="CAB43281.1"/>
    <property type="molecule type" value="mRNA"/>
</dbReference>
<dbReference type="CCDS" id="CCDS5793.1">
    <molecule id="Q9NUX5-1"/>
</dbReference>
<dbReference type="PIR" id="T08766">
    <property type="entry name" value="T08766"/>
</dbReference>
<dbReference type="RefSeq" id="NP_001036059.1">
    <property type="nucleotide sequence ID" value="NM_001042594.1"/>
</dbReference>
<dbReference type="RefSeq" id="NP_056265.2">
    <molecule id="Q9NUX5-1"/>
    <property type="nucleotide sequence ID" value="NM_015450.3"/>
</dbReference>
<dbReference type="RefSeq" id="XP_006715980.1">
    <property type="nucleotide sequence ID" value="XM_006715917.3"/>
</dbReference>
<dbReference type="PDB" id="1XJV">
    <property type="method" value="X-ray"/>
    <property type="resolution" value="1.73 A"/>
    <property type="chains" value="A=6-299"/>
</dbReference>
<dbReference type="PDB" id="3KJO">
    <property type="method" value="X-ray"/>
    <property type="resolution" value="1.80 A"/>
    <property type="chains" value="A=1-299"/>
</dbReference>
<dbReference type="PDB" id="3KJP">
    <property type="method" value="X-ray"/>
    <property type="resolution" value="1.80 A"/>
    <property type="chains" value="A=1-299"/>
</dbReference>
<dbReference type="PDB" id="5H65">
    <property type="method" value="X-ray"/>
    <property type="resolution" value="2.10 A"/>
    <property type="chains" value="A=341-634"/>
</dbReference>
<dbReference type="PDB" id="5UN7">
    <property type="method" value="X-ray"/>
    <property type="resolution" value="2.10 A"/>
    <property type="chains" value="A=330-634"/>
</dbReference>
<dbReference type="PDB" id="7QXB">
    <property type="method" value="EM"/>
    <property type="resolution" value="3.91 A"/>
    <property type="chains" value="P=1-634"/>
</dbReference>
<dbReference type="PDB" id="7QXS">
    <property type="method" value="EM"/>
    <property type="resolution" value="3.91 A"/>
    <property type="chains" value="P=1-634"/>
</dbReference>
<dbReference type="PDB" id="7S1O">
    <property type="method" value="X-ray"/>
    <property type="resolution" value="2.55 A"/>
    <property type="chains" value="A/B=325-634"/>
</dbReference>
<dbReference type="PDB" id="7S1T">
    <property type="method" value="X-ray"/>
    <property type="resolution" value="2.90 A"/>
    <property type="chains" value="A/D/G/J=325-634"/>
</dbReference>
<dbReference type="PDB" id="7S1U">
    <property type="method" value="X-ray"/>
    <property type="resolution" value="2.55 A"/>
    <property type="chains" value="A/B=331-634"/>
</dbReference>
<dbReference type="PDB" id="8SH0">
    <property type="method" value="X-ray"/>
    <property type="resolution" value="2.16 A"/>
    <property type="chains" value="A=1-299"/>
</dbReference>
<dbReference type="PDB" id="8SH1">
    <property type="method" value="X-ray"/>
    <property type="resolution" value="2.60 A"/>
    <property type="chains" value="A=1-299"/>
</dbReference>
<dbReference type="PDB" id="8SOJ">
    <property type="method" value="EM"/>
    <property type="resolution" value="3.80 A"/>
    <property type="chains" value="D=2-634"/>
</dbReference>
<dbReference type="PDB" id="8SOK">
    <property type="method" value="EM"/>
    <property type="resolution" value="4.10 A"/>
    <property type="chains" value="D=2-634"/>
</dbReference>
<dbReference type="PDBsum" id="1XJV"/>
<dbReference type="PDBsum" id="3KJO"/>
<dbReference type="PDBsum" id="3KJP"/>
<dbReference type="PDBsum" id="5H65"/>
<dbReference type="PDBsum" id="5UN7"/>
<dbReference type="PDBsum" id="7QXB"/>
<dbReference type="PDBsum" id="7QXS"/>
<dbReference type="PDBsum" id="7S1O"/>
<dbReference type="PDBsum" id="7S1T"/>
<dbReference type="PDBsum" id="7S1U"/>
<dbReference type="PDBsum" id="8SH0"/>
<dbReference type="PDBsum" id="8SH1"/>
<dbReference type="PDBsum" id="8SOJ"/>
<dbReference type="PDBsum" id="8SOK"/>
<dbReference type="EMDB" id="EMD-14197"/>
<dbReference type="EMDB" id="EMD-14199"/>
<dbReference type="EMDB" id="EMD-40659"/>
<dbReference type="EMDB" id="EMD-40660"/>
<dbReference type="SMR" id="Q9NUX5"/>
<dbReference type="BioGRID" id="117417">
    <property type="interactions" value="241"/>
</dbReference>
<dbReference type="ComplexPortal" id="CPX-152">
    <property type="entry name" value="Shelterin complex"/>
</dbReference>
<dbReference type="CORUM" id="Q9NUX5"/>
<dbReference type="DIP" id="DIP-29610N"/>
<dbReference type="FunCoup" id="Q9NUX5">
    <property type="interactions" value="2311"/>
</dbReference>
<dbReference type="IntAct" id="Q9NUX5">
    <property type="interactions" value="190"/>
</dbReference>
<dbReference type="STRING" id="9606.ENSP00000350249"/>
<dbReference type="BindingDB" id="Q9NUX5"/>
<dbReference type="ChEMBL" id="CHEMBL5908"/>
<dbReference type="MoonDB" id="Q9NUX5">
    <property type="type" value="Predicted"/>
</dbReference>
<dbReference type="GlyGen" id="Q9NUX5">
    <property type="glycosylation" value="1 site, 1 O-linked glycan (1 site)"/>
</dbReference>
<dbReference type="iPTMnet" id="Q9NUX5"/>
<dbReference type="PhosphoSitePlus" id="Q9NUX5"/>
<dbReference type="BioMuta" id="POT1"/>
<dbReference type="DMDM" id="50401179"/>
<dbReference type="jPOST" id="Q9NUX5"/>
<dbReference type="MassIVE" id="Q9NUX5"/>
<dbReference type="PaxDb" id="9606-ENSP00000350249"/>
<dbReference type="PeptideAtlas" id="Q9NUX5"/>
<dbReference type="ProteomicsDB" id="82726">
    <molecule id="Q9NUX5-1"/>
</dbReference>
<dbReference type="ProteomicsDB" id="82727">
    <molecule id="Q9NUX5-2"/>
</dbReference>
<dbReference type="Pumba" id="Q9NUX5"/>
<dbReference type="Antibodypedia" id="31798">
    <property type="antibodies" value="307 antibodies from 32 providers"/>
</dbReference>
<dbReference type="DNASU" id="25913"/>
<dbReference type="Ensembl" id="ENST00000357628.8">
    <molecule id="Q9NUX5-1"/>
    <property type="protein sequence ID" value="ENSP00000350249.3"/>
    <property type="gene ID" value="ENSG00000128513.16"/>
</dbReference>
<dbReference type="Ensembl" id="ENST00000653241.1">
    <molecule id="Q9NUX5-1"/>
    <property type="protein sequence ID" value="ENSP00000499476.1"/>
    <property type="gene ID" value="ENSG00000128513.16"/>
</dbReference>
<dbReference type="Ensembl" id="ENST00000655761.1">
    <molecule id="Q9NUX5-1"/>
    <property type="protein sequence ID" value="ENSP00000499635.1"/>
    <property type="gene ID" value="ENSG00000128513.16"/>
</dbReference>
<dbReference type="Ensembl" id="ENST00000664366.1">
    <molecule id="Q9NUX5-1"/>
    <property type="protein sequence ID" value="ENSP00000499290.1"/>
    <property type="gene ID" value="ENSG00000128513.16"/>
</dbReference>
<dbReference type="Ensembl" id="ENST00000668382.1">
    <molecule id="Q9NUX5-1"/>
    <property type="protein sequence ID" value="ENSP00000499546.1"/>
    <property type="gene ID" value="ENSG00000128513.16"/>
</dbReference>
<dbReference type="GeneID" id="25913"/>
<dbReference type="KEGG" id="hsa:25913"/>
<dbReference type="MANE-Select" id="ENST00000357628.8">
    <property type="protein sequence ID" value="ENSP00000350249.3"/>
    <property type="RefSeq nucleotide sequence ID" value="NM_015450.3"/>
    <property type="RefSeq protein sequence ID" value="NP_056265.2"/>
</dbReference>
<dbReference type="UCSC" id="uc003vlm.4">
    <molecule id="Q9NUX5-1"/>
    <property type="organism name" value="human"/>
</dbReference>
<dbReference type="AGR" id="HGNC:17284"/>
<dbReference type="CTD" id="25913"/>
<dbReference type="DisGeNET" id="25913"/>
<dbReference type="GeneCards" id="POT1"/>
<dbReference type="GeneReviews" id="POT1"/>
<dbReference type="HGNC" id="HGNC:17284">
    <property type="gene designation" value="POT1"/>
</dbReference>
<dbReference type="HPA" id="ENSG00000128513">
    <property type="expression patterns" value="Low tissue specificity"/>
</dbReference>
<dbReference type="MalaCards" id="POT1"/>
<dbReference type="MIM" id="606478">
    <property type="type" value="gene"/>
</dbReference>
<dbReference type="MIM" id="615848">
    <property type="type" value="phenotype"/>
</dbReference>
<dbReference type="MIM" id="620367">
    <property type="type" value="phenotype"/>
</dbReference>
<dbReference type="MIM" id="620368">
    <property type="type" value="phenotype"/>
</dbReference>
<dbReference type="neXtProt" id="NX_Q9NUX5"/>
<dbReference type="OpenTargets" id="ENSG00000128513"/>
<dbReference type="Orphanet" id="251630">
    <property type="disease" value="Anaplastic oligodendroglioma"/>
</dbReference>
<dbReference type="Orphanet" id="67038">
    <property type="disease" value="B-cell chronic lymphocytic leukemia"/>
</dbReference>
<dbReference type="Orphanet" id="618">
    <property type="disease" value="Familial melanoma"/>
</dbReference>
<dbReference type="Orphanet" id="251627">
    <property type="disease" value="Oligodendroglioma"/>
</dbReference>
<dbReference type="PharmGKB" id="PA134934904"/>
<dbReference type="VEuPathDB" id="HostDB:ENSG00000128513"/>
<dbReference type="eggNOG" id="KOG4757">
    <property type="taxonomic scope" value="Eukaryota"/>
</dbReference>
<dbReference type="GeneTree" id="ENSGT00390000018285"/>
<dbReference type="HOGENOM" id="CLU_019567_0_0_1"/>
<dbReference type="InParanoid" id="Q9NUX5"/>
<dbReference type="OMA" id="NHVHLAK"/>
<dbReference type="OrthoDB" id="2186770at2759"/>
<dbReference type="PAN-GO" id="Q9NUX5">
    <property type="GO annotations" value="6 GO annotations based on evolutionary models"/>
</dbReference>
<dbReference type="PhylomeDB" id="Q9NUX5"/>
<dbReference type="TreeFam" id="TF328398"/>
<dbReference type="PathwayCommons" id="Q9NUX5"/>
<dbReference type="Reactome" id="R-HSA-110328">
    <property type="pathway name" value="Recognition and association of DNA glycosylase with site containing an affected pyrimidine"/>
</dbReference>
<dbReference type="Reactome" id="R-HSA-110329">
    <property type="pathway name" value="Cleavage of the damaged pyrimidine"/>
</dbReference>
<dbReference type="Reactome" id="R-HSA-110330">
    <property type="pathway name" value="Recognition and association of DNA glycosylase with site containing an affected purine"/>
</dbReference>
<dbReference type="Reactome" id="R-HSA-110331">
    <property type="pathway name" value="Cleavage of the damaged purine"/>
</dbReference>
<dbReference type="Reactome" id="R-HSA-1221632">
    <property type="pathway name" value="Meiotic synapsis"/>
</dbReference>
<dbReference type="Reactome" id="R-HSA-171306">
    <property type="pathway name" value="Packaging Of Telomere Ends"/>
</dbReference>
<dbReference type="Reactome" id="R-HSA-171319">
    <property type="pathway name" value="Telomere Extension By Telomerase"/>
</dbReference>
<dbReference type="Reactome" id="R-HSA-174411">
    <property type="pathway name" value="Polymerase switching on the C-strand of the telomere"/>
</dbReference>
<dbReference type="Reactome" id="R-HSA-174414">
    <property type="pathway name" value="Processive synthesis on the C-strand of the telomere"/>
</dbReference>
<dbReference type="Reactome" id="R-HSA-174417">
    <property type="pathway name" value="Telomere C-strand (Lagging Strand) Synthesis"/>
</dbReference>
<dbReference type="Reactome" id="R-HSA-174430">
    <property type="pathway name" value="Telomere C-strand synthesis initiation"/>
</dbReference>
<dbReference type="Reactome" id="R-HSA-174437">
    <property type="pathway name" value="Removal of the Flap Intermediate from the C-strand"/>
</dbReference>
<dbReference type="Reactome" id="R-HSA-2559586">
    <property type="pathway name" value="DNA Damage/Telomere Stress Induced Senescence"/>
</dbReference>
<dbReference type="Reactome" id="R-HSA-9670095">
    <property type="pathway name" value="Inhibition of DNA recombination at telomere"/>
</dbReference>
<dbReference type="SignaLink" id="Q9NUX5"/>
<dbReference type="SIGNOR" id="Q9NUX5"/>
<dbReference type="BioGRID-ORCS" id="25913">
    <property type="hits" value="392 hits in 1169 CRISPR screens"/>
</dbReference>
<dbReference type="ChiTaRS" id="POT1">
    <property type="organism name" value="human"/>
</dbReference>
<dbReference type="EvolutionaryTrace" id="Q9NUX5"/>
<dbReference type="GeneWiki" id="POT1"/>
<dbReference type="GenomeRNAi" id="25913"/>
<dbReference type="Pharos" id="Q9NUX5">
    <property type="development level" value="Tbio"/>
</dbReference>
<dbReference type="PRO" id="PR:Q9NUX5"/>
<dbReference type="Proteomes" id="UP000005640">
    <property type="component" value="Chromosome 7"/>
</dbReference>
<dbReference type="RNAct" id="Q9NUX5">
    <property type="molecule type" value="protein"/>
</dbReference>
<dbReference type="Bgee" id="ENSG00000128513">
    <property type="expression patterns" value="Expressed in secondary oocyte and 193 other cell types or tissues"/>
</dbReference>
<dbReference type="ExpressionAtlas" id="Q9NUX5">
    <property type="expression patterns" value="baseline and differential"/>
</dbReference>
<dbReference type="GO" id="GO:0000781">
    <property type="term" value="C:chromosome, telomeric region"/>
    <property type="evidence" value="ECO:0000314"/>
    <property type="project" value="UniProtKB"/>
</dbReference>
<dbReference type="GO" id="GO:0000783">
    <property type="term" value="C:nuclear telomere cap complex"/>
    <property type="evidence" value="ECO:0000314"/>
    <property type="project" value="BHF-UCL"/>
</dbReference>
<dbReference type="GO" id="GO:0005654">
    <property type="term" value="C:nucleoplasm"/>
    <property type="evidence" value="ECO:0000314"/>
    <property type="project" value="HPA"/>
</dbReference>
<dbReference type="GO" id="GO:0070187">
    <property type="term" value="C:shelterin complex"/>
    <property type="evidence" value="ECO:0000314"/>
    <property type="project" value="BHF-UCL"/>
</dbReference>
<dbReference type="GO" id="GO:1905773">
    <property type="term" value="F:8-hydroxy-2'-deoxyguanosine DNA binding"/>
    <property type="evidence" value="ECO:0000314"/>
    <property type="project" value="BHF-UCL"/>
</dbReference>
<dbReference type="GO" id="GO:0017151">
    <property type="term" value="F:DEAD/H-box RNA helicase binding"/>
    <property type="evidence" value="ECO:0000353"/>
    <property type="project" value="BHF-UCL"/>
</dbReference>
<dbReference type="GO" id="GO:1990955">
    <property type="term" value="F:G-rich single-stranded DNA binding"/>
    <property type="evidence" value="ECO:0000314"/>
    <property type="project" value="BHF-UCL"/>
</dbReference>
<dbReference type="GO" id="GO:0098505">
    <property type="term" value="F:G-rich strand telomeric DNA binding"/>
    <property type="evidence" value="ECO:0000314"/>
    <property type="project" value="BHF-UCL"/>
</dbReference>
<dbReference type="GO" id="GO:0043047">
    <property type="term" value="F:single-stranded telomeric DNA binding"/>
    <property type="evidence" value="ECO:0000314"/>
    <property type="project" value="BHF-UCL"/>
</dbReference>
<dbReference type="GO" id="GO:0010521">
    <property type="term" value="F:telomerase inhibitor activity"/>
    <property type="evidence" value="ECO:0000314"/>
    <property type="project" value="BHF-UCL"/>
</dbReference>
<dbReference type="GO" id="GO:0061821">
    <property type="term" value="F:telomeric D-loop binding"/>
    <property type="evidence" value="ECO:0000314"/>
    <property type="project" value="BHF-UCL"/>
</dbReference>
<dbReference type="GO" id="GO:0042162">
    <property type="term" value="F:telomeric DNA binding"/>
    <property type="evidence" value="ECO:0000314"/>
    <property type="project" value="BHF-UCL"/>
</dbReference>
<dbReference type="GO" id="GO:0070200">
    <property type="term" value="P:establishment of protein localization to telomere"/>
    <property type="evidence" value="ECO:0000315"/>
    <property type="project" value="BHF-UCL"/>
</dbReference>
<dbReference type="GO" id="GO:0032211">
    <property type="term" value="P:negative regulation of telomere maintenance via telomerase"/>
    <property type="evidence" value="ECO:0000314"/>
    <property type="project" value="BHF-UCL"/>
</dbReference>
<dbReference type="GO" id="GO:0060383">
    <property type="term" value="P:positive regulation of DNA strand elongation"/>
    <property type="evidence" value="ECO:0000314"/>
    <property type="project" value="BHF-UCL"/>
</dbReference>
<dbReference type="GO" id="GO:0032206">
    <property type="term" value="P:positive regulation of telomere maintenance"/>
    <property type="evidence" value="ECO:0000303"/>
    <property type="project" value="ComplexPortal"/>
</dbReference>
<dbReference type="GO" id="GO:0032212">
    <property type="term" value="P:positive regulation of telomere maintenance via telomerase"/>
    <property type="evidence" value="ECO:0000314"/>
    <property type="project" value="BHF-UCL"/>
</dbReference>
<dbReference type="GO" id="GO:1905840">
    <property type="term" value="P:positive regulation of telomeric D-loop disassembly"/>
    <property type="evidence" value="ECO:0000314"/>
    <property type="project" value="BHF-UCL"/>
</dbReference>
<dbReference type="GO" id="GO:2001032">
    <property type="term" value="P:regulation of double-strand break repair via nonhomologous end joining"/>
    <property type="evidence" value="ECO:0000314"/>
    <property type="project" value="CACAO"/>
</dbReference>
<dbReference type="GO" id="GO:0032210">
    <property type="term" value="P:regulation of telomere maintenance via telomerase"/>
    <property type="evidence" value="ECO:0000316"/>
    <property type="project" value="BHF-UCL"/>
</dbReference>
<dbReference type="GO" id="GO:0032202">
    <property type="term" value="P:telomere assembly"/>
    <property type="evidence" value="ECO:0000314"/>
    <property type="project" value="BHF-UCL"/>
</dbReference>
<dbReference type="GO" id="GO:0016233">
    <property type="term" value="P:telomere capping"/>
    <property type="evidence" value="ECO:0000314"/>
    <property type="project" value="ComplexPortal"/>
</dbReference>
<dbReference type="GO" id="GO:0007004">
    <property type="term" value="P:telomere maintenance via telomerase"/>
    <property type="evidence" value="ECO:0000314"/>
    <property type="project" value="UniProtKB"/>
</dbReference>
<dbReference type="GO" id="GO:0061820">
    <property type="term" value="P:telomeric D-loop disassembly"/>
    <property type="evidence" value="ECO:0000316"/>
    <property type="project" value="BHF-UCL"/>
</dbReference>
<dbReference type="CDD" id="cd04497">
    <property type="entry name" value="hPOT1_OB1_like"/>
    <property type="match status" value="1"/>
</dbReference>
<dbReference type="CDD" id="cd04498">
    <property type="entry name" value="hPOT1_OB2"/>
    <property type="match status" value="1"/>
</dbReference>
<dbReference type="CDD" id="cd20374">
    <property type="entry name" value="Pot1C"/>
    <property type="match status" value="1"/>
</dbReference>
<dbReference type="FunFam" id="2.40.50.140:FF:000119">
    <property type="entry name" value="Protection of telomeres 1 homolog"/>
    <property type="match status" value="1"/>
</dbReference>
<dbReference type="FunFam" id="2.40.50.140:FF:000138">
    <property type="entry name" value="Protection of telomeres 1 homolog"/>
    <property type="match status" value="1"/>
</dbReference>
<dbReference type="Gene3D" id="2.40.50.140">
    <property type="entry name" value="Nucleic acid-binding proteins"/>
    <property type="match status" value="2"/>
</dbReference>
<dbReference type="InterPro" id="IPR012340">
    <property type="entry name" value="NA-bd_OB-fold"/>
</dbReference>
<dbReference type="InterPro" id="IPR028389">
    <property type="entry name" value="POT1"/>
</dbReference>
<dbReference type="InterPro" id="IPR048953">
    <property type="entry name" value="POT1_C_insert"/>
</dbReference>
<dbReference type="InterPro" id="IPR032042">
    <property type="entry name" value="POT1PC"/>
</dbReference>
<dbReference type="InterPro" id="IPR011564">
    <property type="entry name" value="Telomer_end-bd_POT1/Cdc13"/>
</dbReference>
<dbReference type="PANTHER" id="PTHR14513">
    <property type="entry name" value="PROTECTION OF TELOMERES 1"/>
    <property type="match status" value="1"/>
</dbReference>
<dbReference type="PANTHER" id="PTHR14513:SF0">
    <property type="entry name" value="PROTECTION OF TELOMERES PROTEIN 1"/>
    <property type="match status" value="1"/>
</dbReference>
<dbReference type="Pfam" id="PF02765">
    <property type="entry name" value="POT1"/>
    <property type="match status" value="1"/>
</dbReference>
<dbReference type="Pfam" id="PF21375">
    <property type="entry name" value="POT1_C_insert"/>
    <property type="match status" value="1"/>
</dbReference>
<dbReference type="Pfam" id="PF16686">
    <property type="entry name" value="POT1PC"/>
    <property type="match status" value="1"/>
</dbReference>
<dbReference type="SMART" id="SM00976">
    <property type="entry name" value="Telo_bind"/>
    <property type="match status" value="1"/>
</dbReference>
<dbReference type="SUPFAM" id="SSF50249">
    <property type="entry name" value="Nucleic acid-binding proteins"/>
    <property type="match status" value="2"/>
</dbReference>
<sequence>MSLVPATNYIYTPLNQLKGGTIVNVYGVVKFFKPPYLSKGTDYCSVVTIVDQTNVKLTCLLFSGNYEALPIIYKNGDIVRFHRLKIQVYKKETQGITSSGFASLTFEGTLGAPIIPRTSSKYFNFTTEDHKMVEALRVWASTHMSPSWTLLKLCDVQPMQYFDLTCQLLGKAEVDGASFLLKVWDGTRTPFPSWRVLIQDLVLEGDLSHIHRLQNLTIDILVYDNHVHVARSLKVGSFLRIYSLHTKLQSMNSENQTMLSLEFHLHGGTSYGRGIRVLPESNSDVDQLKKDLESANLTANQHSDVICQSEPDDSFPSSGSVSLYEVERCQQLSATILTDHQYLERTPLCAILKQKAPQQYRIRAKLRSYKPRRLFQSVKLHCPKCHLLQEVPHEGDLDIIFQDGATKTPDVKLQNTSLYDSKIWTTKNQKGRKVAVHFVKNNGILPLSNECLLLIEGGTLSEICKLSNKFNSVIPVRSGHEDLELLDLSAPFLIQGTIHHYGCKQCSSLRSIQNLNSLVDKTSWIPSSVAEALGIVPLQYVFVMTFTLDDGTGVLEAYLMDSDKFFQIPASEVLMDDDLQKSVDMIMDMFCPPGIKIDAYPWLECFIKSYNVTNGTDNQICYQIFDTTVAEDVI</sequence>
<gene>
    <name type="primary">POT1</name>
</gene>
<keyword id="KW-0002">3D-structure</keyword>
<keyword id="KW-0025">Alternative splicing</keyword>
<keyword id="KW-0158">Chromosome</keyword>
<keyword id="KW-0225">Disease variant</keyword>
<keyword id="KW-0238">DNA-binding</keyword>
<keyword id="KW-0539">Nucleus</keyword>
<keyword id="KW-1267">Proteomics identification</keyword>
<keyword id="KW-1185">Reference proteome</keyword>
<keyword id="KW-0779">Telomere</keyword>
<evidence type="ECO:0000269" key="1">
    <source>
    </source>
</evidence>
<evidence type="ECO:0000269" key="2">
    <source>
    </source>
</evidence>
<evidence type="ECO:0000269" key="3">
    <source>
    </source>
</evidence>
<evidence type="ECO:0000269" key="4">
    <source>
    </source>
</evidence>
<evidence type="ECO:0000269" key="5">
    <source>
    </source>
</evidence>
<evidence type="ECO:0000269" key="6">
    <source>
    </source>
</evidence>
<evidence type="ECO:0000269" key="7">
    <source>
    </source>
</evidence>
<evidence type="ECO:0000269" key="8">
    <source>
    </source>
</evidence>
<evidence type="ECO:0000269" key="9">
    <source>
    </source>
</evidence>
<evidence type="ECO:0000269" key="10">
    <source>
    </source>
</evidence>
<evidence type="ECO:0000269" key="11">
    <source>
    </source>
</evidence>
<evidence type="ECO:0000269" key="12">
    <source>
    </source>
</evidence>
<evidence type="ECO:0000269" key="13">
    <source>
    </source>
</evidence>
<evidence type="ECO:0000269" key="14">
    <source>
    </source>
</evidence>
<evidence type="ECO:0000269" key="15">
    <source>
    </source>
</evidence>
<evidence type="ECO:0000269" key="16">
    <source>
    </source>
</evidence>
<evidence type="ECO:0000269" key="17">
    <source>
    </source>
</evidence>
<evidence type="ECO:0000269" key="18">
    <source>
    </source>
</evidence>
<evidence type="ECO:0000269" key="19">
    <source>
    </source>
</evidence>
<evidence type="ECO:0000305" key="20"/>
<evidence type="ECO:0007829" key="21">
    <source>
        <dbReference type="PDB" id="1XJV"/>
    </source>
</evidence>
<evidence type="ECO:0007829" key="22">
    <source>
        <dbReference type="PDB" id="3KJP"/>
    </source>
</evidence>
<evidence type="ECO:0007829" key="23">
    <source>
        <dbReference type="PDB" id="5H65"/>
    </source>
</evidence>
<evidence type="ECO:0007829" key="24">
    <source>
        <dbReference type="PDB" id="5UN7"/>
    </source>
</evidence>
<evidence type="ECO:0007829" key="25">
    <source>
        <dbReference type="PDB" id="7S1T"/>
    </source>
</evidence>
<organism>
    <name type="scientific">Homo sapiens</name>
    <name type="common">Human</name>
    <dbReference type="NCBI Taxonomy" id="9606"/>
    <lineage>
        <taxon>Eukaryota</taxon>
        <taxon>Metazoa</taxon>
        <taxon>Chordata</taxon>
        <taxon>Craniata</taxon>
        <taxon>Vertebrata</taxon>
        <taxon>Euteleostomi</taxon>
        <taxon>Mammalia</taxon>
        <taxon>Eutheria</taxon>
        <taxon>Euarchontoglires</taxon>
        <taxon>Primates</taxon>
        <taxon>Haplorrhini</taxon>
        <taxon>Catarrhini</taxon>
        <taxon>Hominidae</taxon>
        <taxon>Homo</taxon>
    </lineage>
</organism>
<feature type="chain" id="PRO_0000121728" description="Protection of telomeres protein 1">
    <location>
        <begin position="1"/>
        <end position="634"/>
    </location>
</feature>
<feature type="region of interest" description="DNA-binding">
    <location>
        <begin position="33"/>
        <end position="48"/>
    </location>
</feature>
<feature type="region of interest" description="DNA-binding">
    <location>
        <begin position="270"/>
        <end position="273"/>
    </location>
</feature>
<feature type="site" description="DNA-binding">
    <location>
        <position position="243"/>
    </location>
</feature>
<feature type="splice variant" id="VSP_010846" description="In isoform 2." evidence="20">
    <original>ALGIVPL</original>
    <variation>DVNSVLV</variation>
    <location>
        <begin position="532"/>
        <end position="538"/>
    </location>
</feature>
<feature type="splice variant" id="VSP_010847" description="In isoform 2." evidence="20">
    <location>
        <begin position="539"/>
        <end position="634"/>
    </location>
</feature>
<feature type="sequence variant" id="VAR_088595" description="In TPDS3; uncertain significance; decreased DNA binding; affects function in telomere maintenance; telomere length is increased when the mutant is expressed in heterologous cells." evidence="17 19">
    <original>I</original>
    <variation>T</variation>
    <location>
        <position position="78"/>
    </location>
</feature>
<feature type="sequence variant" id="VAR_071390" description="In TPDS3; complete abolition of POT1-DNA complex formation, thus disrupting the interaction with telomeres and leading to elongated telomeres; dbSNP:rs587777472." evidence="14">
    <original>Y</original>
    <variation>C</variation>
    <location>
        <position position="89"/>
    </location>
</feature>
<feature type="sequence variant" id="VAR_071391" description="In TPDS3; complete abolition of POT1-DNA complex formation, thus disrupting the interaction with telomeres and leading to elongated telomeres; dbSNP:rs587777474." evidence="14">
    <original>Q</original>
    <variation>E</variation>
    <location>
        <position position="94"/>
    </location>
</feature>
<feature type="sequence variant" id="VAR_075717" description="In TPDS3; dbSNP:rs797045168." evidence="15">
    <original>G</original>
    <variation>C</variation>
    <location>
        <position position="95"/>
    </location>
</feature>
<feature type="sequence variant" id="VAR_071392" description="In TPDS3; increased telomere intensity signals and telomere fragility; dbSNP:rs587777475." evidence="13">
    <original>R</original>
    <variation>H</variation>
    <location>
        <position position="137"/>
    </location>
</feature>
<feature type="sequence variant" id="VAR_071393" description="In TPDS3; dbSNP:rs202187871." evidence="13">
    <original>D</original>
    <variation>N</variation>
    <location>
        <position position="224"/>
    </location>
</feature>
<feature type="sequence variant" id="VAR_088596" description="In PFBMFT8; uncertain significance; affects function in telomere maintenance in patient cells and when expressed in heterologous cells; decreased DNA binding; decreased localization to nucleus; no effect on interaction with ADC; no effect on localization to telomeres." evidence="18">
    <original>L</original>
    <variation>S</variation>
    <location>
        <position position="259"/>
    </location>
</feature>
<feature type="sequence variant" id="VAR_071394" description="In TPDS3; significantly increased telomere length and numbers of fragile telomeres; dbSNP:rs587777477." evidence="13">
    <original>S</original>
    <variation>N</variation>
    <location>
        <position position="270"/>
    </location>
</feature>
<feature type="sequence variant" id="VAR_071395" description="In TPDS3; complete abolition of POT1-DNA complex formation, thus disrupting the interaction with telomeres and leading to elongated telomeres; dbSNP:rs587777476." evidence="14">
    <original>R</original>
    <variation>L</variation>
    <location>
        <position position="273"/>
    </location>
</feature>
<feature type="sequence variant" id="VAR_088597" description="In TPDS3; likely pathogenic; decreased DNA binding." evidence="19">
    <original>R</original>
    <variation>Q</variation>
    <location>
        <position position="273"/>
    </location>
</feature>
<feature type="sequence variant" id="VAR_088598" description="In CRMCC3; uncertain significance; affects function in telomere maintenance when expressed in heterologous cells; no effect on interaction with ADC; no effect on localization to telomeres." evidence="16">
    <original>S</original>
    <variation>L</variation>
    <location>
        <position position="322"/>
    </location>
</feature>
<feature type="sequence variant" id="VAR_034393" description="In dbSNP:rs34973253.">
    <original>V</original>
    <variation>M</variation>
    <location>
        <position position="529"/>
    </location>
</feature>
<feature type="sequence variant" id="VAR_071396" description="In TPDS3; dbSNP:rs537377921." evidence="13">
    <original>A</original>
    <variation>P</variation>
    <location>
        <position position="532"/>
    </location>
</feature>
<feature type="sequence variant" id="VAR_071397" description="In TPDS3; increased telomere intensity signals and telomere fragility; dbSNP:rs587777478." evidence="13">
    <original>Q</original>
    <variation>H</variation>
    <location>
        <position position="623"/>
    </location>
</feature>
<feature type="sequence conflict" description="In Ref. 3; BAA91568." evidence="20" ref="3">
    <original>D</original>
    <variation>V</variation>
    <location>
        <position position="410"/>
    </location>
</feature>
<feature type="sequence conflict" description="In Ref. 3; BAB15404." evidence="20" ref="3">
    <original>K</original>
    <variation>Q</variation>
    <location>
        <position position="412"/>
    </location>
</feature>
<feature type="sequence conflict" description="In Ref. 7; CAB43281." evidence="20" ref="7">
    <original>H</original>
    <variation>D</variation>
    <location>
        <position position="499"/>
    </location>
</feature>
<feature type="helix" evidence="21">
    <location>
        <begin position="14"/>
        <end position="16"/>
    </location>
</feature>
<feature type="strand" evidence="21">
    <location>
        <begin position="19"/>
        <end position="37"/>
    </location>
</feature>
<feature type="strand" evidence="21">
    <location>
        <begin position="39"/>
        <end position="50"/>
    </location>
</feature>
<feature type="strand" evidence="21">
    <location>
        <begin position="56"/>
        <end position="65"/>
    </location>
</feature>
<feature type="helix" evidence="21">
    <location>
        <begin position="66"/>
        <end position="68"/>
    </location>
</feature>
<feature type="strand" evidence="21">
    <location>
        <begin position="78"/>
        <end position="89"/>
    </location>
</feature>
<feature type="strand" evidence="21">
    <location>
        <begin position="92"/>
        <end position="106"/>
    </location>
</feature>
<feature type="helix" evidence="21">
    <location>
        <begin position="127"/>
        <end position="143"/>
    </location>
</feature>
<feature type="helix" evidence="21">
    <location>
        <begin position="153"/>
        <end position="155"/>
    </location>
</feature>
<feature type="strand" evidence="21">
    <location>
        <begin position="161"/>
        <end position="173"/>
    </location>
</feature>
<feature type="strand" evidence="21">
    <location>
        <begin position="175"/>
        <end position="184"/>
    </location>
</feature>
<feature type="turn" evidence="22">
    <location>
        <begin position="200"/>
        <end position="202"/>
    </location>
</feature>
<feature type="helix" evidence="21">
    <location>
        <begin position="207"/>
        <end position="213"/>
    </location>
</feature>
<feature type="helix" evidence="21">
    <location>
        <begin position="214"/>
        <end position="216"/>
    </location>
</feature>
<feature type="strand" evidence="21">
    <location>
        <begin position="217"/>
        <end position="223"/>
    </location>
</feature>
<feature type="helix" evidence="21">
    <location>
        <begin position="226"/>
        <end position="232"/>
    </location>
</feature>
<feature type="strand" evidence="21">
    <location>
        <begin position="238"/>
        <end position="251"/>
    </location>
</feature>
<feature type="strand" evidence="21">
    <location>
        <begin position="257"/>
        <end position="265"/>
    </location>
</feature>
<feature type="helix" evidence="21">
    <location>
        <begin position="270"/>
        <end position="272"/>
    </location>
</feature>
<feature type="strand" evidence="21">
    <location>
        <begin position="274"/>
        <end position="278"/>
    </location>
</feature>
<feature type="helix" evidence="21">
    <location>
        <begin position="283"/>
        <end position="297"/>
    </location>
</feature>
<feature type="strand" evidence="24">
    <location>
        <begin position="334"/>
        <end position="339"/>
    </location>
</feature>
<feature type="helix" evidence="23">
    <location>
        <begin position="348"/>
        <end position="352"/>
    </location>
</feature>
<feature type="strand" evidence="23">
    <location>
        <begin position="359"/>
        <end position="370"/>
    </location>
</feature>
<feature type="helix" evidence="23">
    <location>
        <begin position="374"/>
        <end position="377"/>
    </location>
</feature>
<feature type="strand" evidence="23">
    <location>
        <begin position="378"/>
        <end position="381"/>
    </location>
</feature>
<feature type="turn" evidence="23">
    <location>
        <begin position="383"/>
        <end position="385"/>
    </location>
</feature>
<feature type="strand" evidence="23">
    <location>
        <begin position="388"/>
        <end position="390"/>
    </location>
</feature>
<feature type="helix" evidence="23">
    <location>
        <begin position="394"/>
        <end position="404"/>
    </location>
</feature>
<feature type="helix" evidence="23">
    <location>
        <begin position="411"/>
        <end position="413"/>
    </location>
</feature>
<feature type="strand" evidence="23">
    <location>
        <begin position="417"/>
        <end position="425"/>
    </location>
</feature>
<feature type="strand" evidence="23">
    <location>
        <begin position="427"/>
        <end position="429"/>
    </location>
</feature>
<feature type="strand" evidence="23">
    <location>
        <begin position="433"/>
        <end position="439"/>
    </location>
</feature>
<feature type="helix" evidence="23">
    <location>
        <begin position="448"/>
        <end position="450"/>
    </location>
</feature>
<feature type="strand" evidence="23">
    <location>
        <begin position="452"/>
        <end position="457"/>
    </location>
</feature>
<feature type="helix" evidence="23">
    <location>
        <begin position="460"/>
        <end position="469"/>
    </location>
</feature>
<feature type="strand" evidence="23">
    <location>
        <begin position="470"/>
        <end position="478"/>
    </location>
</feature>
<feature type="strand" evidence="23">
    <location>
        <begin position="480"/>
        <end position="486"/>
    </location>
</feature>
<feature type="strand" evidence="23">
    <location>
        <begin position="492"/>
        <end position="495"/>
    </location>
</feature>
<feature type="strand" evidence="23">
    <location>
        <begin position="498"/>
        <end position="500"/>
    </location>
</feature>
<feature type="turn" evidence="23">
    <location>
        <begin position="504"/>
        <end position="506"/>
    </location>
</feature>
<feature type="helix" evidence="23">
    <location>
        <begin position="512"/>
        <end position="517"/>
    </location>
</feature>
<feature type="strand" evidence="23">
    <location>
        <begin position="521"/>
        <end position="523"/>
    </location>
</feature>
<feature type="helix" evidence="23">
    <location>
        <begin position="526"/>
        <end position="532"/>
    </location>
</feature>
<feature type="strand" evidence="23">
    <location>
        <begin position="539"/>
        <end position="549"/>
    </location>
</feature>
<feature type="strand" evidence="23">
    <location>
        <begin position="554"/>
        <end position="563"/>
    </location>
</feature>
<feature type="turn" evidence="23">
    <location>
        <begin position="564"/>
        <end position="566"/>
    </location>
</feature>
<feature type="helix" evidence="23">
    <location>
        <begin position="570"/>
        <end position="573"/>
    </location>
</feature>
<feature type="helix" evidence="23">
    <location>
        <begin position="577"/>
        <end position="590"/>
    </location>
</feature>
<feature type="strand" evidence="23">
    <location>
        <begin position="593"/>
        <end position="595"/>
    </location>
</feature>
<feature type="helix" evidence="23">
    <location>
        <begin position="597"/>
        <end position="599"/>
    </location>
</feature>
<feature type="strand" evidence="23">
    <location>
        <begin position="603"/>
        <end position="611"/>
    </location>
</feature>
<feature type="strand" evidence="25">
    <location>
        <begin position="614"/>
        <end position="616"/>
    </location>
</feature>
<feature type="strand" evidence="23">
    <location>
        <begin position="620"/>
        <end position="626"/>
    </location>
</feature>
<feature type="turn" evidence="23">
    <location>
        <begin position="630"/>
        <end position="632"/>
    </location>
</feature>
<protein>
    <recommendedName>
        <fullName>Protection of telomeres protein 1</fullName>
        <shortName>hPot1</shortName>
    </recommendedName>
    <alternativeName>
        <fullName>POT1-like telomere end-binding protein</fullName>
    </alternativeName>
</protein>
<comment type="function">
    <text evidence="3 4 9 10 12 16 18">Component of the telomerase ribonucleoprotein (RNP) complex that is essential for the replication of chromosome termini. Is a component of the double-stranded telomeric DNA-binding TRF1 complex which is involved in the regulation of telomere length by cis-inhibition of telomerase. Also acts as a single-stranded telomeric DNA-binding protein and thus may act as a downstream effector of the TRF1 complex and may transduce information about telomere maintenance and/or length to the telomere terminus. Component of the shelterin complex (telosome) that is involved in the regulation of telomere length and protection. Shelterin associates with arrays of double-stranded TTAGGG repeats added by telomerase and protects chromosome ends; without its protective activity, telomeres are no longer hidden from the DNA damage surveillance and chromosome ends are inappropriately processed by DNA repair pathways. Binds to two or more telomeric single-stranded 5'-TTAGGG-3' repeats (G-strand) and with high specificity to a minimal telomeric single-stranded 5'-TAGGGTTAG-3' sequence. Binds telomeric single-stranded sequences internally or at proximity of a 3'-end. Its activity is TERT dependent but it does not increase TERT activity by itself. In contrast, the ACD-POT1 heterodimer enhances telomere elongation by increasing telomerase processivity.</text>
</comment>
<comment type="subunit">
    <text evidence="3 5 6 7 8 10 11 16 18">Homodimer or homooligomer (PubMed:17237768). Component of the shelterin complex (telosome) composed of TERF1, TERF2, TINF2, TERF2IP, ACD and POT1 (PubMed:15316005, PubMed:15383534). Binds single-stranded telomeric DNA as a monomer (PubMed:15558049). Associated component of the telomerase holoenzyme complex (PubMed:19179534). Found in a complex with TERF1, TINF2 and TNKS1 (PubMed:12768206). Interacts with TNKS1. Forms heterodimers with ACD (PubMed:15231715, PubMed:27013236, PubMed:35420632). Identified in a complex with ACD and single-stranded telomeric DNA (PubMed:17237768).</text>
</comment>
<comment type="interaction">
    <interactant intactId="EBI-752420">
        <id>Q9NUX5</id>
    </interactant>
    <interactant intactId="EBI-717666">
        <id>Q96AP0</id>
        <label>ACD</label>
    </interactant>
    <organismsDiffer>false</organismsDiffer>
    <experiments>11</experiments>
</comment>
<comment type="interaction">
    <interactant intactId="EBI-752420">
        <id>Q9NUX5</id>
    </interactant>
    <interactant intactId="EBI-3905126">
        <id>P30838</id>
        <label>ALDH3A1</label>
    </interactant>
    <organismsDiffer>false</organismsDiffer>
    <experiments>2</experiments>
</comment>
<comment type="interaction">
    <interactant intactId="EBI-752420">
        <id>Q9NUX5</id>
    </interactant>
    <interactant intactId="EBI-352622">
        <id>P07355</id>
        <label>ANXA2</label>
    </interactant>
    <organismsDiffer>false</organismsDiffer>
    <experiments>2</experiments>
</comment>
<comment type="interaction">
    <interactant intactId="EBI-752420">
        <id>Q9NUX5</id>
    </interactant>
    <interactant intactId="EBI-2874058">
        <id>Q9BV29</id>
        <label>CCDC32</label>
    </interactant>
    <organismsDiffer>false</organismsDiffer>
    <experiments>2</experiments>
</comment>
<comment type="interaction">
    <interactant intactId="EBI-752420">
        <id>Q9NUX5</id>
    </interactant>
    <interactant intactId="EBI-10201319">
        <id>Q549N0</id>
        <label>CFL2</label>
    </interactant>
    <organismsDiffer>false</organismsDiffer>
    <experiments>3</experiments>
</comment>
<comment type="interaction">
    <interactant intactId="EBI-752420">
        <id>Q9NUX5</id>
    </interactant>
    <interactant intactId="EBI-351218">
        <id>Q9Y281</id>
        <label>CFL2</label>
    </interactant>
    <organismsDiffer>false</organismsDiffer>
    <experiments>3</experiments>
</comment>
<comment type="interaction">
    <interactant intactId="EBI-752420">
        <id>Q9NUX5</id>
    </interactant>
    <interactant intactId="EBI-10192241">
        <id>O95833</id>
        <label>CLIC3</label>
    </interactant>
    <organismsDiffer>false</organismsDiffer>
    <experiments>2</experiments>
</comment>
<comment type="interaction">
    <interactant intactId="EBI-752420">
        <id>Q9NUX5</id>
    </interactant>
    <interactant intactId="EBI-750390">
        <id>Q6PJW8</id>
        <label>CNST</label>
    </interactant>
    <organismsDiffer>false</organismsDiffer>
    <experiments>2</experiments>
</comment>
<comment type="interaction">
    <interactant intactId="EBI-752420">
        <id>Q9NUX5</id>
    </interactant>
    <interactant intactId="EBI-1046024">
        <id>O60496</id>
        <label>DOK2</label>
    </interactant>
    <organismsDiffer>false</organismsDiffer>
    <experiments>2</experiments>
</comment>
<comment type="interaction">
    <interactant intactId="EBI-752420">
        <id>Q9NUX5</id>
    </interactant>
    <interactant intactId="EBI-6916534">
        <id>O94808</id>
        <label>GFPT2</label>
    </interactant>
    <organismsDiffer>false</organismsDiffer>
    <experiments>2</experiments>
</comment>
<comment type="interaction">
    <interactant intactId="EBI-752420">
        <id>Q9NUX5</id>
    </interactant>
    <interactant intactId="EBI-4289554">
        <id>Q99795</id>
        <label>GPA33</label>
    </interactant>
    <organismsDiffer>false</organismsDiffer>
    <experiments>2</experiments>
</comment>
<comment type="interaction">
    <interactant intactId="EBI-752420">
        <id>Q9NUX5</id>
    </interactant>
    <interactant intactId="EBI-743215">
        <id>P46952</id>
        <label>HAAO</label>
    </interactant>
    <organismsDiffer>false</organismsDiffer>
    <experiments>2</experiments>
</comment>
<comment type="interaction">
    <interactant intactId="EBI-752420">
        <id>Q9NUX5</id>
    </interactant>
    <interactant intactId="EBI-3915568">
        <id>P50747</id>
        <label>HLCS</label>
    </interactant>
    <organismsDiffer>false</organismsDiffer>
    <experiments>2</experiments>
</comment>
<comment type="interaction">
    <interactant intactId="EBI-752420">
        <id>Q9NUX5</id>
    </interactant>
    <interactant intactId="EBI-2806151">
        <id>P09601</id>
        <label>HMOX1</label>
    </interactant>
    <organismsDiffer>false</organismsDiffer>
    <experiments>2</experiments>
</comment>
<comment type="interaction">
    <interactant intactId="EBI-752420">
        <id>Q9NUX5</id>
    </interactant>
    <interactant intactId="EBI-11052499">
        <id>P0DMV8</id>
        <label>HSPA1A</label>
    </interactant>
    <organismsDiffer>false</organismsDiffer>
    <experiments>2</experiments>
</comment>
<comment type="interaction">
    <interactant intactId="EBI-752420">
        <id>Q9NUX5</id>
    </interactant>
    <interactant intactId="EBI-720563">
        <id>Q9NPH2</id>
        <label>ISYNA1</label>
    </interactant>
    <organismsDiffer>false</organismsDiffer>
    <experiments>2</experiments>
</comment>
<comment type="interaction">
    <interactant intactId="EBI-752420">
        <id>Q9NUX5</id>
    </interactant>
    <interactant intactId="EBI-725897">
        <id>Q96A73</id>
        <label>KIAA1191</label>
    </interactant>
    <organismsDiffer>false</organismsDiffer>
    <experiments>2</experiments>
</comment>
<comment type="interaction">
    <interactant intactId="EBI-752420">
        <id>Q9NUX5</id>
    </interactant>
    <interactant intactId="EBI-310528">
        <id>Q8WXG6</id>
        <label>MADD</label>
    </interactant>
    <organismsDiffer>false</organismsDiffer>
    <experiments>2</experiments>
</comment>
<comment type="interaction">
    <interactant intactId="EBI-752420">
        <id>Q9NUX5</id>
    </interactant>
    <interactant intactId="EBI-743122">
        <id>P43358</id>
        <label>MAGEA4</label>
    </interactant>
    <organismsDiffer>false</organismsDiffer>
    <experiments>2</experiments>
</comment>
<comment type="interaction">
    <interactant intactId="EBI-752420">
        <id>Q9NUX5</id>
    </interactant>
    <interactant intactId="EBI-49783">
        <id>Q12851</id>
        <label>MAP4K2</label>
    </interactant>
    <organismsDiffer>false</organismsDiffer>
    <experiments>2</experiments>
</comment>
<comment type="interaction">
    <interactant intactId="EBI-752420">
        <id>Q9NUX5</id>
    </interactant>
    <interactant intactId="EBI-740630">
        <id>Q03426</id>
        <label>MVK</label>
    </interactant>
    <organismsDiffer>false</organismsDiffer>
    <experiments>2</experiments>
</comment>
<comment type="interaction">
    <interactant intactId="EBI-752420">
        <id>Q9NUX5</id>
    </interactant>
    <interactant intactId="EBI-721769">
        <id>Q9BY11</id>
        <label>PACSIN1</label>
    </interactant>
    <organismsDiffer>false</organismsDiffer>
    <experiments>2</experiments>
</comment>
<comment type="interaction">
    <interactant intactId="EBI-752420">
        <id>Q9NUX5</id>
    </interactant>
    <interactant intactId="EBI-11305258">
        <id>Q96GU1</id>
        <label>PAGE5</label>
    </interactant>
    <organismsDiffer>false</organismsDiffer>
    <experiments>2</experiments>
</comment>
<comment type="interaction">
    <interactant intactId="EBI-752420">
        <id>Q9NUX5</id>
    </interactant>
    <interactant intactId="EBI-7413304">
        <id>Q01064</id>
        <label>PDE1B</label>
    </interactant>
    <organismsDiffer>false</organismsDiffer>
    <experiments>2</experiments>
</comment>
<comment type="interaction">
    <interactant intactId="EBI-752420">
        <id>Q9NUX5</id>
    </interactant>
    <interactant intactId="EBI-2623130">
        <id>Q5SRE7</id>
        <label>PHYHD1</label>
    </interactant>
    <organismsDiffer>false</organismsDiffer>
    <experiments>2</experiments>
</comment>
<comment type="interaction">
    <interactant intactId="EBI-752420">
        <id>Q9NUX5</id>
    </interactant>
    <interactant intactId="EBI-751947">
        <id>Q8IUZ5</id>
        <label>PHYKPL</label>
    </interactant>
    <organismsDiffer>false</organismsDiffer>
    <experiments>2</experiments>
</comment>
<comment type="interaction">
    <interactant intactId="EBI-752420">
        <id>Q9NUX5</id>
    </interactant>
    <interactant intactId="EBI-725582">
        <id>Q9P0Z9</id>
        <label>PIPOX</label>
    </interactant>
    <organismsDiffer>false</organismsDiffer>
    <experiments>2</experiments>
</comment>
<comment type="interaction">
    <interactant intactId="EBI-752420">
        <id>Q9NUX5</id>
    </interactant>
    <interactant intactId="EBI-2880603">
        <id>Q86WR7</id>
        <label>PROSER2</label>
    </interactant>
    <organismsDiffer>false</organismsDiffer>
    <experiments>2</experiments>
</comment>
<comment type="interaction">
    <interactant intactId="EBI-752420">
        <id>Q9NUX5</id>
    </interactant>
    <interactant intactId="EBI-2352802">
        <id>Q9BRP8</id>
        <label>PYM1</label>
    </interactant>
    <organismsDiffer>false</organismsDiffer>
    <experiments>2</experiments>
</comment>
<comment type="interaction">
    <interactant intactId="EBI-752420">
        <id>Q9NUX5</id>
    </interactant>
    <interactant intactId="EBI-1048085">
        <id>Q9BWH6</id>
        <label>RPAP1</label>
    </interactant>
    <organismsDiffer>false</organismsDiffer>
    <experiments>2</experiments>
</comment>
<comment type="interaction">
    <interactant intactId="EBI-752420">
        <id>Q9NUX5</id>
    </interactant>
    <interactant intactId="EBI-10179062">
        <id>O43704</id>
        <label>SULT1B1</label>
    </interactant>
    <organismsDiffer>false</organismsDiffer>
    <experiments>2</experiments>
</comment>
<comment type="interaction">
    <interactant intactId="EBI-752420">
        <id>Q9NUX5</id>
    </interactant>
    <interactant intactId="EBI-6690555">
        <id>Q9BR01</id>
        <label>SULT4A1</label>
    </interactant>
    <organismsDiffer>false</organismsDiffer>
    <experiments>2</experiments>
</comment>
<comment type="interaction">
    <interactant intactId="EBI-752420">
        <id>Q9NUX5</id>
    </interactant>
    <interactant intactId="EBI-10770179">
        <id>Q96A49</id>
        <label>SYAP1</label>
    </interactant>
    <organismsDiffer>false</organismsDiffer>
    <experiments>2</experiments>
</comment>
<comment type="interaction">
    <interactant intactId="EBI-752420">
        <id>Q9NUX5</id>
    </interactant>
    <interactant intactId="EBI-706637">
        <id>Q15554</id>
        <label>TERF2</label>
    </interactant>
    <organismsDiffer>false</organismsDiffer>
    <experiments>10</experiments>
</comment>
<comment type="interaction">
    <interactant intactId="EBI-752420">
        <id>Q9NUX5</id>
    </interactant>
    <interactant intactId="EBI-717399">
        <id>Q9BSI4</id>
        <label>TINF2</label>
    </interactant>
    <organismsDiffer>false</organismsDiffer>
    <experiments>6</experiments>
</comment>
<comment type="interaction">
    <interactant intactId="EBI-752420">
        <id>Q9NUX5</id>
    </interactant>
    <interactant intactId="EBI-2688673">
        <id>P63313</id>
        <label>TMSB10</label>
    </interactant>
    <organismsDiffer>false</organismsDiffer>
    <experiments>2</experiments>
</comment>
<comment type="interaction">
    <interactant intactId="EBI-752420">
        <id>Q9NUX5</id>
    </interactant>
    <interactant intactId="EBI-719396">
        <id>Q9Y4P8</id>
        <label>WIPI2</label>
    </interactant>
    <organismsDiffer>false</organismsDiffer>
    <experiments>2</experiments>
</comment>
<comment type="interaction">
    <interactant intactId="EBI-15593881">
        <id>Q9NUX5-1</id>
    </interactant>
    <interactant intactId="EBI-717666">
        <id>Q96AP0</id>
        <label>ACD</label>
    </interactant>
    <organismsDiffer>false</organismsDiffer>
    <experiments>4</experiments>
</comment>
<comment type="subcellular location">
    <subcellularLocation>
        <location evidence="2 16 17 18 19">Nucleus</location>
    </subcellularLocation>
    <subcellularLocation>
        <location evidence="2 16 17 18 19">Chromosome</location>
        <location evidence="2 16 17 18 19">Telomere</location>
    </subcellularLocation>
    <text evidence="2">Colocalizes with telomeric DNA.</text>
</comment>
<comment type="alternative products">
    <event type="alternative splicing"/>
    <isoform>
        <id>Q9NUX5-1</id>
        <name>1</name>
        <name>Variant 1</name>
        <sequence type="displayed"/>
    </isoform>
    <isoform>
        <id>Q9NUX5-2</id>
        <name>2</name>
        <name>Variant 3</name>
        <sequence type="described" ref="VSP_010846 VSP_010847"/>
    </isoform>
    <text>A number of isoforms are produced.</text>
</comment>
<comment type="tissue specificity">
    <text evidence="1 2">Ubiquitous.</text>
</comment>
<comment type="disease" evidence="13 14 15 17 19">
    <disease id="DI-04136">
        <name>Tumor predisposition syndrome 3</name>
        <acronym>TPDS3</acronym>
        <description>An autosomal dominant disorder characterized by an increased risk for the development of various types of benign and malignant neoplasms throughout life, with age-dependent penetrance. Affected individuals can develop neoplasms involving epithelial, mesenchymal, and neuronal tissues, as well as lymphoid and myeloid cancers. The disorder is associated with elongated telomeres.</description>
        <dbReference type="MIM" id="615848"/>
    </disease>
    <text>Disease susceptibility is associated with variants affecting the gene represented in this entry.</text>
</comment>
<comment type="disease" evidence="16">
    <disease id="DI-06680">
        <name>Cerebroretinal microangiopathy with calcifications and cysts 3</name>
        <acronym>CRMCC3</acronym>
        <description>An autosomal recessive disorder characterized by intrauterine growth retardation, retinal exudates, global developmental delay, neurologic regression, intracranial calcifications, and leukoencephalopathy.</description>
        <dbReference type="MIM" id="620368"/>
    </disease>
    <text>The disease may be caused by variants affecting the gene represented in this entry.</text>
</comment>
<comment type="disease" evidence="18">
    <disease id="DI-06678">
        <name>Pulmonary fibrosis, and/or bone marrow failure syndrome, telomere-related, 8</name>
        <acronym>PFBMFT8</acronym>
        <description>An autosomal dominant disease associated with shortened telomeres. Pulmonary fibrosis is the most common manifestation. Other features include aplastic anemia due to bone marrow failure, hepatic fibrosis, and increased cancer risk. Phenotype, age at onset, and severity are determined by telomere length. PFBMFT8 is characterized by the onset of progressive pulmonary fibrosis in adulthood, signs of bone marrow failure, such as thrombocytopenia, liver dysfunction, and features of dyskeratosis congenita, including premature graying of the hair, in some affected individuals.</description>
        <dbReference type="MIM" id="620367"/>
    </disease>
    <text>The disease may be caused by variants affecting the gene represented in this entry.</text>
</comment>
<comment type="similarity">
    <text evidence="20">Belongs to the telombin family.</text>
</comment>
<comment type="sequence caution" evidence="20">
    <conflict type="erroneous initiation">
        <sequence resource="EMBL-CDS" id="BAB15404"/>
    </conflict>
    <text>Truncated N-terminus.</text>
</comment>
<accession>Q9NUX5</accession>
<accession>O95018</accession>
<accession>Q5MJ36</accession>
<accession>Q9H662</accession>
<accession>Q9NW19</accession>
<accession>Q9UG95</accession>
<reference key="1">
    <citation type="journal article" date="2001" name="Science">
        <title>Pot1, the putative telomere end-binding protein in fission yeast and humans.</title>
        <authorList>
            <person name="Baumann P."/>
            <person name="Cech T.R."/>
        </authorList>
    </citation>
    <scope>NUCLEOTIDE SEQUENCE [MRNA] (ISOFORM 1)</scope>
    <scope>TISSUE SPECIFICITY</scope>
    <scope>SINGLE-STRANDED TELOMERE DNA-BINDING</scope>
    <source>
        <tissue>Ovary</tissue>
    </source>
</reference>
<reference key="2">
    <citation type="journal article" date="2002" name="Mol. Cell. Biol.">
        <title>Human Pot1 (protection of telomeres) protein: cytolocalization, gene structure, and alternative splicing.</title>
        <authorList>
            <person name="Baumann P."/>
            <person name="Podell E."/>
            <person name="Cech T.R."/>
        </authorList>
    </citation>
    <scope>NUCLEOTIDE SEQUENCE [MRNA] (ISOFORM 1)</scope>
    <scope>ALTERNATIVE SPLICING (ISOFORMS 1 AND 2)</scope>
    <scope>TISSUE SPECIFICITY</scope>
    <scope>SUBCELLULAR LOCATION</scope>
    <scope>SINGLE-STRANDED TELOMERE DNA-BINDING</scope>
</reference>
<reference key="3">
    <citation type="journal article" date="2004" name="Nat. Genet.">
        <title>Complete sequencing and characterization of 21,243 full-length human cDNAs.</title>
        <authorList>
            <person name="Ota T."/>
            <person name="Suzuki Y."/>
            <person name="Nishikawa T."/>
            <person name="Otsuki T."/>
            <person name="Sugiyama T."/>
            <person name="Irie R."/>
            <person name="Wakamatsu A."/>
            <person name="Hayashi K."/>
            <person name="Sato H."/>
            <person name="Nagai K."/>
            <person name="Kimura K."/>
            <person name="Makita H."/>
            <person name="Sekine M."/>
            <person name="Obayashi M."/>
            <person name="Nishi T."/>
            <person name="Shibahara T."/>
            <person name="Tanaka T."/>
            <person name="Ishii S."/>
            <person name="Yamamoto J."/>
            <person name="Saito K."/>
            <person name="Kawai Y."/>
            <person name="Isono Y."/>
            <person name="Nakamura Y."/>
            <person name="Nagahari K."/>
            <person name="Murakami K."/>
            <person name="Yasuda T."/>
            <person name="Iwayanagi T."/>
            <person name="Wagatsuma M."/>
            <person name="Shiratori A."/>
            <person name="Sudo H."/>
            <person name="Hosoiri T."/>
            <person name="Kaku Y."/>
            <person name="Kodaira H."/>
            <person name="Kondo H."/>
            <person name="Sugawara M."/>
            <person name="Takahashi M."/>
            <person name="Kanda K."/>
            <person name="Yokoi T."/>
            <person name="Furuya T."/>
            <person name="Kikkawa E."/>
            <person name="Omura Y."/>
            <person name="Abe K."/>
            <person name="Kamihara K."/>
            <person name="Katsuta N."/>
            <person name="Sato K."/>
            <person name="Tanikawa M."/>
            <person name="Yamazaki M."/>
            <person name="Ninomiya K."/>
            <person name="Ishibashi T."/>
            <person name="Yamashita H."/>
            <person name="Murakawa K."/>
            <person name="Fujimori K."/>
            <person name="Tanai H."/>
            <person name="Kimata M."/>
            <person name="Watanabe M."/>
            <person name="Hiraoka S."/>
            <person name="Chiba Y."/>
            <person name="Ishida S."/>
            <person name="Ono Y."/>
            <person name="Takiguchi S."/>
            <person name="Watanabe S."/>
            <person name="Yosida M."/>
            <person name="Hotuta T."/>
            <person name="Kusano J."/>
            <person name="Kanehori K."/>
            <person name="Takahashi-Fujii A."/>
            <person name="Hara H."/>
            <person name="Tanase T.-O."/>
            <person name="Nomura Y."/>
            <person name="Togiya S."/>
            <person name="Komai F."/>
            <person name="Hara R."/>
            <person name="Takeuchi K."/>
            <person name="Arita M."/>
            <person name="Imose N."/>
            <person name="Musashino K."/>
            <person name="Yuuki H."/>
            <person name="Oshima A."/>
            <person name="Sasaki N."/>
            <person name="Aotsuka S."/>
            <person name="Yoshikawa Y."/>
            <person name="Matsunawa H."/>
            <person name="Ichihara T."/>
            <person name="Shiohata N."/>
            <person name="Sano S."/>
            <person name="Moriya S."/>
            <person name="Momiyama H."/>
            <person name="Satoh N."/>
            <person name="Takami S."/>
            <person name="Terashima Y."/>
            <person name="Suzuki O."/>
            <person name="Nakagawa S."/>
            <person name="Senoh A."/>
            <person name="Mizoguchi H."/>
            <person name="Goto Y."/>
            <person name="Shimizu F."/>
            <person name="Wakebe H."/>
            <person name="Hishigaki H."/>
            <person name="Watanabe T."/>
            <person name="Sugiyama A."/>
            <person name="Takemoto M."/>
            <person name="Kawakami B."/>
            <person name="Yamazaki M."/>
            <person name="Watanabe K."/>
            <person name="Kumagai A."/>
            <person name="Itakura S."/>
            <person name="Fukuzumi Y."/>
            <person name="Fujimori Y."/>
            <person name="Komiyama M."/>
            <person name="Tashiro H."/>
            <person name="Tanigami A."/>
            <person name="Fujiwara T."/>
            <person name="Ono T."/>
            <person name="Yamada K."/>
            <person name="Fujii Y."/>
            <person name="Ozaki K."/>
            <person name="Hirao M."/>
            <person name="Ohmori Y."/>
            <person name="Kawabata A."/>
            <person name="Hikiji T."/>
            <person name="Kobatake N."/>
            <person name="Inagaki H."/>
            <person name="Ikema Y."/>
            <person name="Okamoto S."/>
            <person name="Okitani R."/>
            <person name="Kawakami T."/>
            <person name="Noguchi S."/>
            <person name="Itoh T."/>
            <person name="Shigeta K."/>
            <person name="Senba T."/>
            <person name="Matsumura K."/>
            <person name="Nakajima Y."/>
            <person name="Mizuno T."/>
            <person name="Morinaga M."/>
            <person name="Sasaki M."/>
            <person name="Togashi T."/>
            <person name="Oyama M."/>
            <person name="Hata H."/>
            <person name="Watanabe M."/>
            <person name="Komatsu T."/>
            <person name="Mizushima-Sugano J."/>
            <person name="Satoh T."/>
            <person name="Shirai Y."/>
            <person name="Takahashi Y."/>
            <person name="Nakagawa K."/>
            <person name="Okumura K."/>
            <person name="Nagase T."/>
            <person name="Nomura N."/>
            <person name="Kikuchi H."/>
            <person name="Masuho Y."/>
            <person name="Yamashita R."/>
            <person name="Nakai K."/>
            <person name="Yada T."/>
            <person name="Nakamura Y."/>
            <person name="Ohara O."/>
            <person name="Isogai T."/>
            <person name="Sugano S."/>
        </authorList>
    </citation>
    <scope>NUCLEOTIDE SEQUENCE [LARGE SCALE MRNA] (ISOFORM 1)</scope>
    <source>
        <tissue>Placenta</tissue>
        <tissue>Small intestine</tissue>
        <tissue>Teratocarcinoma</tissue>
    </source>
</reference>
<reference key="4">
    <citation type="journal article" date="2003" name="Nature">
        <title>The DNA sequence of human chromosome 7.</title>
        <authorList>
            <person name="Hillier L.W."/>
            <person name="Fulton R.S."/>
            <person name="Fulton L.A."/>
            <person name="Graves T.A."/>
            <person name="Pepin K.H."/>
            <person name="Wagner-McPherson C."/>
            <person name="Layman D."/>
            <person name="Maas J."/>
            <person name="Jaeger S."/>
            <person name="Walker R."/>
            <person name="Wylie K."/>
            <person name="Sekhon M."/>
            <person name="Becker M.C."/>
            <person name="O'Laughlin M.D."/>
            <person name="Schaller M.E."/>
            <person name="Fewell G.A."/>
            <person name="Delehaunty K.D."/>
            <person name="Miner T.L."/>
            <person name="Nash W.E."/>
            <person name="Cordes M."/>
            <person name="Du H."/>
            <person name="Sun H."/>
            <person name="Edwards J."/>
            <person name="Bradshaw-Cordum H."/>
            <person name="Ali J."/>
            <person name="Andrews S."/>
            <person name="Isak A."/>
            <person name="Vanbrunt A."/>
            <person name="Nguyen C."/>
            <person name="Du F."/>
            <person name="Lamar B."/>
            <person name="Courtney L."/>
            <person name="Kalicki J."/>
            <person name="Ozersky P."/>
            <person name="Bielicki L."/>
            <person name="Scott K."/>
            <person name="Holmes A."/>
            <person name="Harkins R."/>
            <person name="Harris A."/>
            <person name="Strong C.M."/>
            <person name="Hou S."/>
            <person name="Tomlinson C."/>
            <person name="Dauphin-Kohlberg S."/>
            <person name="Kozlowicz-Reilly A."/>
            <person name="Leonard S."/>
            <person name="Rohlfing T."/>
            <person name="Rock S.M."/>
            <person name="Tin-Wollam A.-M."/>
            <person name="Abbott A."/>
            <person name="Minx P."/>
            <person name="Maupin R."/>
            <person name="Strowmatt C."/>
            <person name="Latreille P."/>
            <person name="Miller N."/>
            <person name="Johnson D."/>
            <person name="Murray J."/>
            <person name="Woessner J.P."/>
            <person name="Wendl M.C."/>
            <person name="Yang S.-P."/>
            <person name="Schultz B.R."/>
            <person name="Wallis J.W."/>
            <person name="Spieth J."/>
            <person name="Bieri T.A."/>
            <person name="Nelson J.O."/>
            <person name="Berkowicz N."/>
            <person name="Wohldmann P.E."/>
            <person name="Cook L.L."/>
            <person name="Hickenbotham M.T."/>
            <person name="Eldred J."/>
            <person name="Williams D."/>
            <person name="Bedell J.A."/>
            <person name="Mardis E.R."/>
            <person name="Clifton S.W."/>
            <person name="Chissoe S.L."/>
            <person name="Marra M.A."/>
            <person name="Raymond C."/>
            <person name="Haugen E."/>
            <person name="Gillett W."/>
            <person name="Zhou Y."/>
            <person name="James R."/>
            <person name="Phelps K."/>
            <person name="Iadanoto S."/>
            <person name="Bubb K."/>
            <person name="Simms E."/>
            <person name="Levy R."/>
            <person name="Clendenning J."/>
            <person name="Kaul R."/>
            <person name="Kent W.J."/>
            <person name="Furey T.S."/>
            <person name="Baertsch R.A."/>
            <person name="Brent M.R."/>
            <person name="Keibler E."/>
            <person name="Flicek P."/>
            <person name="Bork P."/>
            <person name="Suyama M."/>
            <person name="Bailey J.A."/>
            <person name="Portnoy M.E."/>
            <person name="Torrents D."/>
            <person name="Chinwalla A.T."/>
            <person name="Gish W.R."/>
            <person name="Eddy S.R."/>
            <person name="McPherson J.D."/>
            <person name="Olson M.V."/>
            <person name="Eichler E.E."/>
            <person name="Green E.D."/>
            <person name="Waterston R.H."/>
            <person name="Wilson R.K."/>
        </authorList>
    </citation>
    <scope>NUCLEOTIDE SEQUENCE [LARGE SCALE GENOMIC DNA]</scope>
</reference>
<reference key="5">
    <citation type="submission" date="2005-07" db="EMBL/GenBank/DDBJ databases">
        <authorList>
            <person name="Mural R.J."/>
            <person name="Istrail S."/>
            <person name="Sutton G.G."/>
            <person name="Florea L."/>
            <person name="Halpern A.L."/>
            <person name="Mobarry C.M."/>
            <person name="Lippert R."/>
            <person name="Walenz B."/>
            <person name="Shatkay H."/>
            <person name="Dew I."/>
            <person name="Miller J.R."/>
            <person name="Flanigan M.J."/>
            <person name="Edwards N.J."/>
            <person name="Bolanos R."/>
            <person name="Fasulo D."/>
            <person name="Halldorsson B.V."/>
            <person name="Hannenhalli S."/>
            <person name="Turner R."/>
            <person name="Yooseph S."/>
            <person name="Lu F."/>
            <person name="Nusskern D.R."/>
            <person name="Shue B.C."/>
            <person name="Zheng X.H."/>
            <person name="Zhong F."/>
            <person name="Delcher A.L."/>
            <person name="Huson D.H."/>
            <person name="Kravitz S.A."/>
            <person name="Mouchard L."/>
            <person name="Reinert K."/>
            <person name="Remington K.A."/>
            <person name="Clark A.G."/>
            <person name="Waterman M.S."/>
            <person name="Eichler E.E."/>
            <person name="Adams M.D."/>
            <person name="Hunkapiller M.W."/>
            <person name="Myers E.W."/>
            <person name="Venter J.C."/>
        </authorList>
    </citation>
    <scope>NUCLEOTIDE SEQUENCE [LARGE SCALE GENOMIC DNA]</scope>
</reference>
<reference key="6">
    <citation type="journal article" date="2004" name="Genome Res.">
        <title>The status, quality, and expansion of the NIH full-length cDNA project: the Mammalian Gene Collection (MGC).</title>
        <authorList>
            <consortium name="The MGC Project Team"/>
        </authorList>
    </citation>
    <scope>NUCLEOTIDE SEQUENCE [LARGE SCALE MRNA] (ISOFORM 1)</scope>
    <source>
        <tissue>Skin</tissue>
    </source>
</reference>
<reference key="7">
    <citation type="journal article" date="2007" name="BMC Genomics">
        <title>The full-ORF clone resource of the German cDNA consortium.</title>
        <authorList>
            <person name="Bechtel S."/>
            <person name="Rosenfelder H."/>
            <person name="Duda A."/>
            <person name="Schmidt C.P."/>
            <person name="Ernst U."/>
            <person name="Wellenreuther R."/>
            <person name="Mehrle A."/>
            <person name="Schuster C."/>
            <person name="Bahr A."/>
            <person name="Bloecker H."/>
            <person name="Heubner D."/>
            <person name="Hoerlein A."/>
            <person name="Michel G."/>
            <person name="Wedler H."/>
            <person name="Koehrer K."/>
            <person name="Ottenwaelder B."/>
            <person name="Poustka A."/>
            <person name="Wiemann S."/>
            <person name="Schupp I."/>
        </authorList>
    </citation>
    <scope>NUCLEOTIDE SEQUENCE [LARGE SCALE MRNA] OF 499-634 (ISOFORM 1)</scope>
    <source>
        <tissue>Uterus</tissue>
    </source>
</reference>
<reference key="8">
    <citation type="journal article" date="2003" name="Curr. Biol.">
        <title>Human POT1 facilitates telomere elongation by telomerase.</title>
        <authorList>
            <person name="Colgin L.M."/>
            <person name="Baran K."/>
            <person name="Baumann P."/>
            <person name="Cech T.R."/>
            <person name="Reddel R.R."/>
        </authorList>
    </citation>
    <scope>FUNCTION IN TELOMERE REGULATION</scope>
    <scope>ALTERNATIVE SPLICING (ISOFORMS 1 AND 2)</scope>
    <scope>SINGLE-STRANDED TELOMERE DNA-BINDING</scope>
</reference>
<reference key="9">
    <citation type="journal article" date="2003" name="Nature">
        <title>POT1 as a terminal transducer of TRF1 telomere length control.</title>
        <authorList>
            <person name="Loayza D."/>
            <person name="De Lange T."/>
        </authorList>
    </citation>
    <scope>FUNCTION IN TELOMERE REGULATION</scope>
    <scope>IDENTIFICATION IN A COMPLEX WITH TERF1; TINF2 AND TNKS1</scope>
    <scope>INTERACTION WITH TNKS1</scope>
</reference>
<reference key="10">
    <citation type="journal article" date="2004" name="J. Biol. Chem.">
        <title>DNA binding features of human POT1: a nonamer 5'-TAGGGTTAG-3' minimal binding site, sequence specificity, and internal binding to multimeric sites.</title>
        <authorList>
            <person name="Loayza D."/>
            <person name="Parsons H."/>
            <person name="Donigian J."/>
            <person name="Hoke K."/>
            <person name="de Lange T."/>
        </authorList>
    </citation>
    <scope>SINGLE-STRANDED TELOMERE DNA-BINDING</scope>
</reference>
<reference key="11">
    <citation type="journal article" date="2004" name="Genes Dev.">
        <title>POT1-interacting protein PIP1: a telomere length regulator that recruits POT1 to the TIN2/TRF1 complex.</title>
        <authorList>
            <person name="Ye J.Z.-S."/>
            <person name="Hockemeyer D."/>
            <person name="Krutchinsky A.N."/>
            <person name="Loayza D."/>
            <person name="Hooper S.M."/>
            <person name="Chait B.T."/>
            <person name="de Lange T."/>
        </authorList>
    </citation>
    <scope>INTERACTION WITH ACD</scope>
</reference>
<reference key="12">
    <citation type="journal article" date="2004" name="J. Biol. Chem.">
        <title>TIN2 binds TRF1 and TRF2 simultaneously and stabilizes the TRF2 complex on telomeres.</title>
        <authorList>
            <person name="Ye J.Z.-S."/>
            <person name="Donigian J.R."/>
            <person name="van Overbeek M."/>
            <person name="Loayza D."/>
            <person name="Luo Y."/>
            <person name="Krutchinsky A.N."/>
            <person name="Chait B.T."/>
            <person name="de Lange T."/>
        </authorList>
    </citation>
    <scope>IDENTIFICATION IN THE SHELTERIN COMPLEX</scope>
</reference>
<reference key="13">
    <citation type="journal article" date="2004" name="J. Biol. Chem.">
        <title>Telosome, a mammalian telomere-associated complex formed by multiple telomeric proteins.</title>
        <authorList>
            <person name="Liu D."/>
            <person name="O'Connor M.S."/>
            <person name="Qin J."/>
            <person name="Songyang Z."/>
        </authorList>
    </citation>
    <scope>IDENTIFICATION IN THE SHELTERIN COMPLEX</scope>
</reference>
<reference key="14">
    <citation type="journal article" date="2005" name="Genes Dev.">
        <title>Shelterin: the protein complex that shapes and safeguards human telomeres.</title>
        <authorList>
            <person name="de Lange T."/>
        </authorList>
    </citation>
    <scope>FUNCTION OF THE SHELTERIN COMPLEX</scope>
</reference>
<reference key="15">
    <citation type="journal article" date="2007" name="Nature">
        <title>The POT1-TPP1 telomere complex is a telomerase processivity factor.</title>
        <authorList>
            <person name="Wang F."/>
            <person name="Podell E.R."/>
            <person name="Zaug A.J."/>
            <person name="Yang Y."/>
            <person name="Baciu P."/>
            <person name="Cech T.R."/>
            <person name="Lei M."/>
        </authorList>
    </citation>
    <scope>FUNCTION</scope>
    <scope>SUBUNIT</scope>
    <scope>IDENTIFICATION IN A COMPLEX WITH ACD AND SINGLE-STRANDED TELOMERIC DNA</scope>
</reference>
<reference key="16">
    <citation type="journal article" date="2009" name="Science">
        <title>A human telomerase holoenzyme protein required for Cajal body localization and telomere synthesis.</title>
        <authorList>
            <person name="Venteicher A.S."/>
            <person name="Abreu E.B."/>
            <person name="Meng Z."/>
            <person name="McCann K.E."/>
            <person name="Terns R.M."/>
            <person name="Veenstra T.D."/>
            <person name="Terns M.P."/>
            <person name="Artandi S.E."/>
        </authorList>
    </citation>
    <scope>IDENTIFICATION IN THE TELOMERASE HOLOENZYME COMPLEX</scope>
</reference>
<reference key="17">
    <citation type="journal article" date="2010" name="Genes Dev.">
        <title>Functional interaction between telomere protein TPP1 and telomerase.</title>
        <authorList>
            <person name="Zaug A.J."/>
            <person name="Podell E.R."/>
            <person name="Nandakumar J."/>
            <person name="Cech T.R."/>
        </authorList>
    </citation>
    <scope>FUNCTION</scope>
</reference>
<reference key="18">
    <citation type="journal article" date="2014" name="Nat. Genet.">
        <title>POT1 loss-of-function variants predispose to familial melanoma.</title>
        <authorList>
            <person name="Robles-Espinoza C.D."/>
            <person name="Harland M."/>
            <person name="Ramsay A.J."/>
            <person name="Aoude L.G."/>
            <person name="Quesada V."/>
            <person name="Ding Z."/>
            <person name="Pooley K.A."/>
            <person name="Pritchard A.L."/>
            <person name="Tiffen J.C."/>
            <person name="Petljak M."/>
            <person name="Palmer J.M."/>
            <person name="Symmons J."/>
            <person name="Johansson P."/>
            <person name="Stark M.S."/>
            <person name="Gartside M.G."/>
            <person name="Snowden H."/>
            <person name="Montgomery G.W."/>
            <person name="Martin N.G."/>
            <person name="Liu J.Z."/>
            <person name="Choi J."/>
            <person name="Makowski M."/>
            <person name="Brown K.M."/>
            <person name="Dunning A.M."/>
            <person name="Keane T.M."/>
            <person name="Lopez-Otin C."/>
            <person name="Gruis N.A."/>
            <person name="Hayward N.K."/>
            <person name="Bishop D.T."/>
            <person name="Newton-Bishop J.A."/>
            <person name="Adams D.J."/>
        </authorList>
    </citation>
    <scope>INVOLVEMENT IN TPDS3</scope>
    <scope>VARIANTS TPDS3 CYS-89; GLU-94 AND LEU-273</scope>
    <scope>CHARACTERIZATION OF VARIANTS TPDS3 CYS-89; GLU-94 AND LEU-273</scope>
</reference>
<reference key="19">
    <citation type="journal article" date="2016" name="Genes Dev.">
        <title>A POT1 mutation implicates defective telomere end fill-in and telomere truncations in Coats plus.</title>
        <authorList>
            <person name="Takai H."/>
            <person name="Jenkinson E."/>
            <person name="Kabir S."/>
            <person name="Babul-Hirji R."/>
            <person name="Najm-Tehrani N."/>
            <person name="Chitayat D.A."/>
            <person name="Crow Y.J."/>
            <person name="de Lange T."/>
        </authorList>
    </citation>
    <scope>INVOLVEMENT IN CRMCC3</scope>
    <scope>VARIANT CRMCC3 LEU-322</scope>
    <scope>CHARACTERIZATION OF VARIANT CRMCC3 LEU-322</scope>
    <scope>FUNCTION</scope>
    <scope>SUBCELLULAR LOCATION</scope>
    <scope>INTERACTION WITH ACD</scope>
</reference>
<reference key="20">
    <citation type="journal article" date="2015" name="J. Natl. Cancer Inst.">
        <title>Germline mutations in shelterin complex genes are associated with familial glioma.</title>
        <authorList>
            <consortium name="Gliogene Consortium"/>
            <person name="Bainbridge M.N."/>
            <person name="Armstrong G.N."/>
            <person name="Gramatges M.M."/>
            <person name="Bertuch A.A."/>
            <person name="Jhangiani S.N."/>
            <person name="Doddapaneni H."/>
            <person name="Lewis L."/>
            <person name="Tombrello J."/>
            <person name="Tsavachidis S."/>
            <person name="Liu Y."/>
            <person name="Jalali A."/>
            <person name="Plon S.E."/>
            <person name="Lau C.C."/>
            <person name="Parsons D.W."/>
            <person name="Claus E.B."/>
            <person name="Barnholtz-Sloan J."/>
            <person name="Il'yasova D."/>
            <person name="Schildkraut J."/>
            <person name="Ali-Osman F."/>
            <person name="Sadetzki S."/>
            <person name="Johansen C."/>
            <person name="Houlston R.S."/>
            <person name="Jenkins R.B."/>
            <person name="Lachance D."/>
            <person name="Olson S.H."/>
            <person name="Bernstein J.L."/>
            <person name="Merrell R.T."/>
            <person name="Wrensch M.R."/>
            <person name="Walsh K.M."/>
            <person name="Davis F.G."/>
            <person name="Lai R."/>
            <person name="Shete S."/>
            <person name="Aldape K."/>
            <person name="Amos C.I."/>
            <person name="Thompson P.A."/>
            <person name="Muzny D.M."/>
            <person name="Gibbs R.A."/>
            <person name="Melin B.S."/>
            <person name="Bondy M.L."/>
        </authorList>
    </citation>
    <scope>INVOLVEMENT IN TPDS3</scope>
    <scope>VARIANT TPDS3 CYS-95</scope>
</reference>
<reference key="21">
    <citation type="journal article" date="2022" name="J. Exp. Med.">
        <title>Telomere dysfunction implicates POT1 in patients with idiopathic pulmonary fibrosis.</title>
        <authorList>
            <person name="Kelich J."/>
            <person name="Aramburu T."/>
            <person name="van der Vis J.J."/>
            <person name="Showe L."/>
            <person name="Kossenkov A."/>
            <person name="van der Smagt J."/>
            <person name="Massink M."/>
            <person name="Schoemaker A."/>
            <person name="Hennekam E."/>
            <person name="Veltkamp M."/>
            <person name="van Moorsel C.H.M."/>
            <person name="Skordalakes E."/>
        </authorList>
    </citation>
    <scope>INVOLVEMENT IN PFBMFT8</scope>
    <scope>VARIANT PFBMFT8 SER-259</scope>
    <scope>CHARACTERIZATION OF VARIANT PFBMFT8 SER-259</scope>
    <scope>FUNCTION</scope>
    <scope>SUBCELLULAR LOCATION</scope>
    <scope>INTERACTION WITH ACD</scope>
</reference>
<reference key="22">
    <citation type="journal article" date="2004" name="Nat. Struct. Mol. Biol.">
        <title>Structure of human POT1 bound to telomeric single-stranded DNA provides a model for chromosome end-protection.</title>
        <authorList>
            <person name="Lei M."/>
            <person name="Podell E.R."/>
            <person name="Cech T.R."/>
        </authorList>
    </citation>
    <scope>X-RAY CRYSTALLOGRAPHY (1.73 ANGSTROMS) OF 6-299 IN COMPLEX WITH SINGLE-STRANDED TELOMERIC DNA</scope>
</reference>
<reference key="23">
    <citation type="journal article" date="2014" name="Nat. Genet.">
        <title>Rare missense variants in POT1 predispose to familial cutaneous malignant melanoma.</title>
        <authorList>
            <person name="Shi J."/>
            <person name="Yang X.R."/>
            <person name="Ballew B."/>
            <person name="Rotunno M."/>
            <person name="Calista D."/>
            <person name="Fargnoli M.C."/>
            <person name="Ghiorzo P."/>
            <person name="Bressac-de Paillerets B."/>
            <person name="Nagore E."/>
            <person name="Avril M.F."/>
            <person name="Caporaso N.E."/>
            <person name="McMaster M.L."/>
            <person name="Cullen M."/>
            <person name="Wang Z."/>
            <person name="Zhang X."/>
            <person name="Bruno W."/>
            <person name="Pastorino L."/>
            <person name="Queirolo P."/>
            <person name="Banuls-Roca J."/>
            <person name="Garcia-Casado Z."/>
            <person name="Vaysse A."/>
            <person name="Mohamdi H."/>
            <person name="Riazalhosseini Y."/>
            <person name="Foglio M."/>
            <person name="Jouenne F."/>
            <person name="Hua X."/>
            <person name="Hyland P.L."/>
            <person name="Yin J."/>
            <person name="Vallabhaneni H."/>
            <person name="Chai W."/>
            <person name="Minghetti P."/>
            <person name="Pellegrini C."/>
            <person name="Ravichandran S."/>
            <person name="Eggermont A."/>
            <person name="Lathrop M."/>
            <person name="Peris K."/>
            <person name="Scarra G.B."/>
            <person name="Landi G."/>
            <person name="Savage S.A."/>
            <person name="Sampson J.N."/>
            <person name="He J."/>
            <person name="Yeager M."/>
            <person name="Goldin L.R."/>
            <person name="Demenais F."/>
            <person name="Chanock S.J."/>
            <person name="Tucker M.A."/>
            <person name="Goldstein A.M."/>
            <person name="Liu Y."/>
            <person name="Landi M.T."/>
        </authorList>
    </citation>
    <scope>VARIANTS TPDS3 HIS-137; ASN-224; ASN-270; PRO-532 AND HIS-623</scope>
    <scope>CHARACTERIZATION OF VARIANTS TPDS3 HIS-137; ASN-270 AND HIS-623</scope>
</reference>
<reference key="24">
    <citation type="journal article" date="2019" name="JAMA Dermatol.">
        <title>Association of the POT1 Germline Missense Variant p.I78T With Familial Melanoma.</title>
        <authorList>
            <person name="Wong K."/>
            <person name="Robles-Espinoza C.D."/>
            <person name="Rodriguez D."/>
            <person name="Rudat S.S."/>
            <person name="Puig S."/>
            <person name="Potrony M."/>
            <person name="Wong C.C."/>
            <person name="Hewinson J."/>
            <person name="Aguilera P."/>
            <person name="Puig-Butille J.A."/>
            <person name="Bressac-de Paillerets B."/>
            <person name="Zattara H."/>
            <person name="van der Weyden L."/>
            <person name="Fletcher C.D.M."/>
            <person name="Brenn T."/>
            <person name="Arends M.J."/>
            <person name="Quesada V."/>
            <person name="Newton-Bishop J.A."/>
            <person name="Lopez-Otin C."/>
            <person name="Bishop D.T."/>
            <person name="Harms P.W."/>
            <person name="Johnson T.M."/>
            <person name="Durham A.B."/>
            <person name="Lombard D.B."/>
            <person name="Adams D.J."/>
        </authorList>
    </citation>
    <scope>VARIANT TPDS3 THR-78</scope>
    <scope>CHARACTERIZATION OF TPDS3 THR-78</scope>
    <scope>FUNCTION</scope>
    <scope>SUBCELLULAR LOCATION</scope>
</reference>
<reference key="25">
    <citation type="journal article" date="2023" name="N. Engl. J. Med.">
        <title>Familial Clonal Hematopoiesis in a Long Telomere Syndrome.</title>
        <authorList>
            <person name="DeBoy E.A."/>
            <person name="Tassia M.G."/>
            <person name="Schratz K.E."/>
            <person name="Yan S.M."/>
            <person name="Cosner Z.L."/>
            <person name="McNally E.J."/>
            <person name="Gable D.L."/>
            <person name="Xiang Z."/>
            <person name="Lombard D.B."/>
            <person name="Antonarakis E.S."/>
            <person name="Gocke C.D."/>
            <person name="McCoy R.C."/>
            <person name="Armanios M."/>
        </authorList>
    </citation>
    <scope>VARIANTS TPDS3 THR-78 AND GLN-273</scope>
    <scope>CHARACTERIZATION OF VARIANTS TPDS3 THR-78 AND GLN-273</scope>
    <scope>FUNCTION</scope>
    <scope>SUBCELLULAR LOCATION</scope>
</reference>
<name>POTE1_HUMAN</name>
<proteinExistence type="evidence at protein level"/>